<comment type="function">
    <text evidence="1">Catalyzes the reversible conversion of ribose-5-phosphate to ribulose 5-phosphate.</text>
</comment>
<comment type="catalytic activity">
    <reaction evidence="1">
        <text>aldehydo-D-ribose 5-phosphate = D-ribulose 5-phosphate</text>
        <dbReference type="Rhea" id="RHEA:14657"/>
        <dbReference type="ChEBI" id="CHEBI:58121"/>
        <dbReference type="ChEBI" id="CHEBI:58273"/>
        <dbReference type="EC" id="5.3.1.6"/>
    </reaction>
</comment>
<comment type="pathway">
    <text evidence="1">Carbohydrate degradation; pentose phosphate pathway; D-ribose 5-phosphate from D-ribulose 5-phosphate (non-oxidative stage): step 1/1.</text>
</comment>
<comment type="subunit">
    <text evidence="1">Homodimer.</text>
</comment>
<comment type="similarity">
    <text evidence="1">Belongs to the ribose 5-phosphate isomerase family.</text>
</comment>
<feature type="chain" id="PRO_1000016944" description="Ribose-5-phosphate isomerase A">
    <location>
        <begin position="1"/>
        <end position="216"/>
    </location>
</feature>
<feature type="active site" description="Proton acceptor" evidence="1">
    <location>
        <position position="101"/>
    </location>
</feature>
<feature type="binding site" evidence="1">
    <location>
        <begin position="26"/>
        <end position="29"/>
    </location>
    <ligand>
        <name>substrate</name>
    </ligand>
</feature>
<feature type="binding site" evidence="1">
    <location>
        <begin position="79"/>
        <end position="82"/>
    </location>
    <ligand>
        <name>substrate</name>
    </ligand>
</feature>
<feature type="binding site" evidence="1">
    <location>
        <begin position="92"/>
        <end position="95"/>
    </location>
    <ligand>
        <name>substrate</name>
    </ligand>
</feature>
<feature type="binding site" evidence="1">
    <location>
        <position position="119"/>
    </location>
    <ligand>
        <name>substrate</name>
    </ligand>
</feature>
<organism>
    <name type="scientific">Legionella pneumophila (strain Corby)</name>
    <dbReference type="NCBI Taxonomy" id="400673"/>
    <lineage>
        <taxon>Bacteria</taxon>
        <taxon>Pseudomonadati</taxon>
        <taxon>Pseudomonadota</taxon>
        <taxon>Gammaproteobacteria</taxon>
        <taxon>Legionellales</taxon>
        <taxon>Legionellaceae</taxon>
        <taxon>Legionella</taxon>
    </lineage>
</organism>
<gene>
    <name evidence="1" type="primary">rpiA</name>
    <name type="ordered locus">LPC_0113</name>
</gene>
<evidence type="ECO:0000255" key="1">
    <source>
        <dbReference type="HAMAP-Rule" id="MF_00170"/>
    </source>
</evidence>
<sequence length="216" mass="23049">MSELKIKAAKAAIAYIEDDMVIGVGTGSTVNFFIKELAAIKHKIEACVASSKATEALLRAEGIPVIDLNSVQDLPIYVDGADEVNERGEMIKGGGGALTREKIVANVATQFICIVDESKVVKRLGEFPVAVEVIPMARSFVARQIVKLGGDPEYREGFVTDNGNIILDVFNLNFSTPMALEDSLNVIPGVVENGVFAKRLADKVLVASASGVNNLK</sequence>
<reference key="1">
    <citation type="submission" date="2006-11" db="EMBL/GenBank/DDBJ databases">
        <title>Identification and characterization of a new conjugation/ type IVA secretion system (trb/tra) of L. pneumophila Corby localized on a mobile genomic island.</title>
        <authorList>
            <person name="Gloeckner G."/>
            <person name="Albert-Weissenberger C."/>
            <person name="Weinmann E."/>
            <person name="Jacobi S."/>
            <person name="Schunder E."/>
            <person name="Steinert M."/>
            <person name="Buchrieser C."/>
            <person name="Hacker J."/>
            <person name="Heuner K."/>
        </authorList>
    </citation>
    <scope>NUCLEOTIDE SEQUENCE [LARGE SCALE GENOMIC DNA]</scope>
    <source>
        <strain>Corby</strain>
    </source>
</reference>
<proteinExistence type="inferred from homology"/>
<protein>
    <recommendedName>
        <fullName evidence="1">Ribose-5-phosphate isomerase A</fullName>
        <ecNumber evidence="1">5.3.1.6</ecNumber>
    </recommendedName>
    <alternativeName>
        <fullName evidence="1">Phosphoriboisomerase A</fullName>
        <shortName evidence="1">PRI</shortName>
    </alternativeName>
</protein>
<name>RPIA_LEGPC</name>
<accession>A5I9R2</accession>
<dbReference type="EC" id="5.3.1.6" evidence="1"/>
<dbReference type="EMBL" id="CP000675">
    <property type="protein sequence ID" value="ABQ54112.1"/>
    <property type="molecule type" value="Genomic_DNA"/>
</dbReference>
<dbReference type="RefSeq" id="WP_011945295.1">
    <property type="nucleotide sequence ID" value="NZ_JAPMSS010000003.1"/>
</dbReference>
<dbReference type="SMR" id="A5I9R2"/>
<dbReference type="KEGG" id="lpc:LPC_0113"/>
<dbReference type="HOGENOM" id="CLU_056590_1_1_6"/>
<dbReference type="UniPathway" id="UPA00115">
    <property type="reaction ID" value="UER00412"/>
</dbReference>
<dbReference type="GO" id="GO:0005829">
    <property type="term" value="C:cytosol"/>
    <property type="evidence" value="ECO:0007669"/>
    <property type="project" value="TreeGrafter"/>
</dbReference>
<dbReference type="GO" id="GO:0004751">
    <property type="term" value="F:ribose-5-phosphate isomerase activity"/>
    <property type="evidence" value="ECO:0007669"/>
    <property type="project" value="UniProtKB-UniRule"/>
</dbReference>
<dbReference type="GO" id="GO:0006014">
    <property type="term" value="P:D-ribose metabolic process"/>
    <property type="evidence" value="ECO:0007669"/>
    <property type="project" value="TreeGrafter"/>
</dbReference>
<dbReference type="GO" id="GO:0009052">
    <property type="term" value="P:pentose-phosphate shunt, non-oxidative branch"/>
    <property type="evidence" value="ECO:0007669"/>
    <property type="project" value="UniProtKB-UniRule"/>
</dbReference>
<dbReference type="CDD" id="cd01398">
    <property type="entry name" value="RPI_A"/>
    <property type="match status" value="1"/>
</dbReference>
<dbReference type="FunFam" id="3.30.70.260:FF:000004">
    <property type="entry name" value="Ribose-5-phosphate isomerase A"/>
    <property type="match status" value="1"/>
</dbReference>
<dbReference type="FunFam" id="3.40.50.1360:FF:000001">
    <property type="entry name" value="Ribose-5-phosphate isomerase A"/>
    <property type="match status" value="1"/>
</dbReference>
<dbReference type="Gene3D" id="3.30.70.260">
    <property type="match status" value="1"/>
</dbReference>
<dbReference type="Gene3D" id="3.40.50.1360">
    <property type="match status" value="1"/>
</dbReference>
<dbReference type="HAMAP" id="MF_00170">
    <property type="entry name" value="Rib_5P_isom_A"/>
    <property type="match status" value="1"/>
</dbReference>
<dbReference type="InterPro" id="IPR037171">
    <property type="entry name" value="NagB/RpiA_transferase-like"/>
</dbReference>
<dbReference type="InterPro" id="IPR020672">
    <property type="entry name" value="Ribose5P_isomerase_typA_subgr"/>
</dbReference>
<dbReference type="InterPro" id="IPR004788">
    <property type="entry name" value="Ribose5P_isomerase_type_A"/>
</dbReference>
<dbReference type="NCBIfam" id="NF001924">
    <property type="entry name" value="PRK00702.1"/>
    <property type="match status" value="1"/>
</dbReference>
<dbReference type="NCBIfam" id="TIGR00021">
    <property type="entry name" value="rpiA"/>
    <property type="match status" value="1"/>
</dbReference>
<dbReference type="PANTHER" id="PTHR11934">
    <property type="entry name" value="RIBOSE-5-PHOSPHATE ISOMERASE"/>
    <property type="match status" value="1"/>
</dbReference>
<dbReference type="PANTHER" id="PTHR11934:SF0">
    <property type="entry name" value="RIBOSE-5-PHOSPHATE ISOMERASE"/>
    <property type="match status" value="1"/>
</dbReference>
<dbReference type="Pfam" id="PF06026">
    <property type="entry name" value="Rib_5-P_isom_A"/>
    <property type="match status" value="1"/>
</dbReference>
<dbReference type="SUPFAM" id="SSF75445">
    <property type="entry name" value="D-ribose-5-phosphate isomerase (RpiA), lid domain"/>
    <property type="match status" value="1"/>
</dbReference>
<dbReference type="SUPFAM" id="SSF100950">
    <property type="entry name" value="NagB/RpiA/CoA transferase-like"/>
    <property type="match status" value="1"/>
</dbReference>
<keyword id="KW-0413">Isomerase</keyword>